<feature type="chain" id="PRO_0000318450" description="Protein translocase subunit SecA">
    <location>
        <begin position="1"/>
        <end position="839"/>
    </location>
</feature>
<feature type="region of interest" description="Disordered" evidence="2">
    <location>
        <begin position="780"/>
        <end position="839"/>
    </location>
</feature>
<feature type="compositionally biased region" description="Basic and acidic residues" evidence="2">
    <location>
        <begin position="780"/>
        <end position="790"/>
    </location>
</feature>
<feature type="compositionally biased region" description="Polar residues" evidence="2">
    <location>
        <begin position="791"/>
        <end position="809"/>
    </location>
</feature>
<feature type="compositionally biased region" description="Basic residues" evidence="2">
    <location>
        <begin position="827"/>
        <end position="839"/>
    </location>
</feature>
<feature type="binding site" evidence="1">
    <location>
        <position position="85"/>
    </location>
    <ligand>
        <name>ATP</name>
        <dbReference type="ChEBI" id="CHEBI:30616"/>
    </ligand>
</feature>
<feature type="binding site" evidence="1">
    <location>
        <begin position="103"/>
        <end position="107"/>
    </location>
    <ligand>
        <name>ATP</name>
        <dbReference type="ChEBI" id="CHEBI:30616"/>
    </ligand>
</feature>
<feature type="binding site" evidence="1">
    <location>
        <position position="493"/>
    </location>
    <ligand>
        <name>ATP</name>
        <dbReference type="ChEBI" id="CHEBI:30616"/>
    </ligand>
</feature>
<feature type="binding site" evidence="1">
    <location>
        <position position="821"/>
    </location>
    <ligand>
        <name>Zn(2+)</name>
        <dbReference type="ChEBI" id="CHEBI:29105"/>
    </ligand>
</feature>
<feature type="binding site" evidence="1">
    <location>
        <position position="823"/>
    </location>
    <ligand>
        <name>Zn(2+)</name>
        <dbReference type="ChEBI" id="CHEBI:29105"/>
    </ligand>
</feature>
<feature type="binding site" evidence="1">
    <location>
        <position position="832"/>
    </location>
    <ligand>
        <name>Zn(2+)</name>
        <dbReference type="ChEBI" id="CHEBI:29105"/>
    </ligand>
</feature>
<feature type="binding site" evidence="1">
    <location>
        <position position="833"/>
    </location>
    <ligand>
        <name>Zn(2+)</name>
        <dbReference type="ChEBI" id="CHEBI:29105"/>
    </ligand>
</feature>
<organism>
    <name type="scientific">Streptococcus pyogenes serotype M2 (strain MGAS10270)</name>
    <dbReference type="NCBI Taxonomy" id="370552"/>
    <lineage>
        <taxon>Bacteria</taxon>
        <taxon>Bacillati</taxon>
        <taxon>Bacillota</taxon>
        <taxon>Bacilli</taxon>
        <taxon>Lactobacillales</taxon>
        <taxon>Streptococcaceae</taxon>
        <taxon>Streptococcus</taxon>
    </lineage>
</organism>
<keyword id="KW-0067">ATP-binding</keyword>
<keyword id="KW-1003">Cell membrane</keyword>
<keyword id="KW-0963">Cytoplasm</keyword>
<keyword id="KW-0472">Membrane</keyword>
<keyword id="KW-0479">Metal-binding</keyword>
<keyword id="KW-0547">Nucleotide-binding</keyword>
<keyword id="KW-0653">Protein transport</keyword>
<keyword id="KW-1278">Translocase</keyword>
<keyword id="KW-0811">Translocation</keyword>
<keyword id="KW-0813">Transport</keyword>
<keyword id="KW-0862">Zinc</keyword>
<protein>
    <recommendedName>
        <fullName evidence="1">Protein translocase subunit SecA</fullName>
        <ecNumber evidence="1">7.4.2.8</ecNumber>
    </recommendedName>
</protein>
<sequence length="839" mass="94705">MANILRKVIENDKGELRKLEKIAKKVESYADQMASLSDRDLQGKTLEFKERYQKGETLEQLLPEAFAVVREAAKRVLGLFPYRVQIMGGIVLHNGDVPEMRTGEGKTLTATMPVYLNAIAGEGVHVITVNEYLSTRDATEMGEVYSWLGLSVGINLAAKSPAEKREAYNCDITYSTNSEVGFDYLRDNMVVRQEDMVQRPLNFALVDEVDSVLIDEARTPLIVSGAVSSETNQLYIRADMFVKTLTSVDYVIDVPTKTIGLSDSGIDKAESYFNLSNLYDIENVALTHFIDNALRANYIMLLDIDYVVSEDGEILIVDQFTGRTMEGRRFSDGLHQAIEAKEGVRIQEESKTSASITYQNMFRMYKKLAGMTGTAKTEEEEFREVYNMRIIPIPTNRPIARIDHTDLLYPTLESKFRAVVEDVKTRHAKGQPILVGTVAVETSDLISRKLVEAGIPHEVLNAKNHFKEAQIIMNAGQRGAVTIATNMAGRGTDIKLGEGVRELGGLCVIGTERHESRRIDNQLRGRSGRQGDPGESQFYLSLEDDLMRRFGSDRIKAFLDRMKLDEEDTVIKSGMLGRQVESAQKRVEGNNYDTRKQVLQYDDVMREQREIIYANRRDVITANRDLGPEIKAMIKRTIDRAVDAHARSNRKDAIDAIVTFARTSLVPEESISAKELRGLKDDQIKEKLYQRALAIYDQQLSKLRDQEAIIEFQKVLILMIVDNKWTEHIDALDQLRNAVGLRGYAQNNPVVEYQAEGFKMFQDMIGAIEFDVTRTMMKAQIHEQERERASQRATTAAPQNIQSQQSANTDDLPKVERNEACPCGSGKKFKNCHGRKSFS</sequence>
<name>SECA_STRPD</name>
<evidence type="ECO:0000255" key="1">
    <source>
        <dbReference type="HAMAP-Rule" id="MF_01382"/>
    </source>
</evidence>
<evidence type="ECO:0000256" key="2">
    <source>
        <dbReference type="SAM" id="MobiDB-lite"/>
    </source>
</evidence>
<dbReference type="EC" id="7.4.2.8" evidence="1"/>
<dbReference type="EMBL" id="CP000260">
    <property type="protein sequence ID" value="ABF34667.1"/>
    <property type="molecule type" value="Genomic_DNA"/>
</dbReference>
<dbReference type="RefSeq" id="WP_002988523.1">
    <property type="nucleotide sequence ID" value="NZ_CVUH01000010.1"/>
</dbReference>
<dbReference type="SMR" id="Q1JF92"/>
<dbReference type="GeneID" id="69900360"/>
<dbReference type="KEGG" id="sph:MGAS10270_Spy1602"/>
<dbReference type="HOGENOM" id="CLU_005314_3_0_9"/>
<dbReference type="Proteomes" id="UP000002436">
    <property type="component" value="Chromosome"/>
</dbReference>
<dbReference type="GO" id="GO:0031522">
    <property type="term" value="C:cell envelope Sec protein transport complex"/>
    <property type="evidence" value="ECO:0007669"/>
    <property type="project" value="TreeGrafter"/>
</dbReference>
<dbReference type="GO" id="GO:0005829">
    <property type="term" value="C:cytosol"/>
    <property type="evidence" value="ECO:0007669"/>
    <property type="project" value="TreeGrafter"/>
</dbReference>
<dbReference type="GO" id="GO:0005886">
    <property type="term" value="C:plasma membrane"/>
    <property type="evidence" value="ECO:0007669"/>
    <property type="project" value="UniProtKB-SubCell"/>
</dbReference>
<dbReference type="GO" id="GO:0005524">
    <property type="term" value="F:ATP binding"/>
    <property type="evidence" value="ECO:0007669"/>
    <property type="project" value="UniProtKB-UniRule"/>
</dbReference>
<dbReference type="GO" id="GO:0046872">
    <property type="term" value="F:metal ion binding"/>
    <property type="evidence" value="ECO:0007669"/>
    <property type="project" value="UniProtKB-KW"/>
</dbReference>
<dbReference type="GO" id="GO:0008564">
    <property type="term" value="F:protein-exporting ATPase activity"/>
    <property type="evidence" value="ECO:0007669"/>
    <property type="project" value="UniProtKB-EC"/>
</dbReference>
<dbReference type="GO" id="GO:0065002">
    <property type="term" value="P:intracellular protein transmembrane transport"/>
    <property type="evidence" value="ECO:0007669"/>
    <property type="project" value="UniProtKB-UniRule"/>
</dbReference>
<dbReference type="GO" id="GO:0017038">
    <property type="term" value="P:protein import"/>
    <property type="evidence" value="ECO:0007669"/>
    <property type="project" value="InterPro"/>
</dbReference>
<dbReference type="GO" id="GO:0006605">
    <property type="term" value="P:protein targeting"/>
    <property type="evidence" value="ECO:0007669"/>
    <property type="project" value="UniProtKB-UniRule"/>
</dbReference>
<dbReference type="GO" id="GO:0043952">
    <property type="term" value="P:protein transport by the Sec complex"/>
    <property type="evidence" value="ECO:0007669"/>
    <property type="project" value="TreeGrafter"/>
</dbReference>
<dbReference type="CDD" id="cd17928">
    <property type="entry name" value="DEXDc_SecA"/>
    <property type="match status" value="1"/>
</dbReference>
<dbReference type="CDD" id="cd18803">
    <property type="entry name" value="SF2_C_secA"/>
    <property type="match status" value="1"/>
</dbReference>
<dbReference type="FunFam" id="1.10.3060.10:FF:000002">
    <property type="entry name" value="Preprotein translocase subunit SecA"/>
    <property type="match status" value="1"/>
</dbReference>
<dbReference type="FunFam" id="3.40.50.300:FF:000429">
    <property type="entry name" value="Preprotein translocase subunit SecA"/>
    <property type="match status" value="1"/>
</dbReference>
<dbReference type="FunFam" id="3.90.1440.10:FF:000001">
    <property type="entry name" value="Preprotein translocase subunit SecA"/>
    <property type="match status" value="1"/>
</dbReference>
<dbReference type="Gene3D" id="1.10.3060.10">
    <property type="entry name" value="Helical scaffold and wing domains of SecA"/>
    <property type="match status" value="1"/>
</dbReference>
<dbReference type="Gene3D" id="3.40.50.300">
    <property type="entry name" value="P-loop containing nucleotide triphosphate hydrolases"/>
    <property type="match status" value="3"/>
</dbReference>
<dbReference type="Gene3D" id="3.90.1440.10">
    <property type="entry name" value="SecA, preprotein cross-linking domain"/>
    <property type="match status" value="1"/>
</dbReference>
<dbReference type="HAMAP" id="MF_01382">
    <property type="entry name" value="SecA"/>
    <property type="match status" value="1"/>
</dbReference>
<dbReference type="InterPro" id="IPR014001">
    <property type="entry name" value="Helicase_ATP-bd"/>
</dbReference>
<dbReference type="InterPro" id="IPR001650">
    <property type="entry name" value="Helicase_C-like"/>
</dbReference>
<dbReference type="InterPro" id="IPR027417">
    <property type="entry name" value="P-loop_NTPase"/>
</dbReference>
<dbReference type="InterPro" id="IPR004027">
    <property type="entry name" value="SEC_C_motif"/>
</dbReference>
<dbReference type="InterPro" id="IPR000185">
    <property type="entry name" value="SecA"/>
</dbReference>
<dbReference type="InterPro" id="IPR020937">
    <property type="entry name" value="SecA_CS"/>
</dbReference>
<dbReference type="InterPro" id="IPR011115">
    <property type="entry name" value="SecA_DEAD"/>
</dbReference>
<dbReference type="InterPro" id="IPR014018">
    <property type="entry name" value="SecA_motor_DEAD"/>
</dbReference>
<dbReference type="InterPro" id="IPR011130">
    <property type="entry name" value="SecA_preprotein_X-link_dom"/>
</dbReference>
<dbReference type="InterPro" id="IPR044722">
    <property type="entry name" value="SecA_SF2_C"/>
</dbReference>
<dbReference type="InterPro" id="IPR011116">
    <property type="entry name" value="SecA_Wing/Scaffold"/>
</dbReference>
<dbReference type="InterPro" id="IPR036266">
    <property type="entry name" value="SecA_Wing/Scaffold_sf"/>
</dbReference>
<dbReference type="InterPro" id="IPR036670">
    <property type="entry name" value="SecA_X-link_sf"/>
</dbReference>
<dbReference type="NCBIfam" id="NF006630">
    <property type="entry name" value="PRK09200.1"/>
    <property type="match status" value="1"/>
</dbReference>
<dbReference type="NCBIfam" id="TIGR00963">
    <property type="entry name" value="secA"/>
    <property type="match status" value="1"/>
</dbReference>
<dbReference type="PANTHER" id="PTHR30612:SF0">
    <property type="entry name" value="CHLOROPLAST PROTEIN-TRANSPORTING ATPASE"/>
    <property type="match status" value="1"/>
</dbReference>
<dbReference type="PANTHER" id="PTHR30612">
    <property type="entry name" value="SECA INNER MEMBRANE COMPONENT OF SEC PROTEIN SECRETION SYSTEM"/>
    <property type="match status" value="1"/>
</dbReference>
<dbReference type="Pfam" id="PF21090">
    <property type="entry name" value="P-loop_SecA"/>
    <property type="match status" value="2"/>
</dbReference>
<dbReference type="Pfam" id="PF02810">
    <property type="entry name" value="SEC-C"/>
    <property type="match status" value="1"/>
</dbReference>
<dbReference type="Pfam" id="PF07517">
    <property type="entry name" value="SecA_DEAD"/>
    <property type="match status" value="1"/>
</dbReference>
<dbReference type="Pfam" id="PF01043">
    <property type="entry name" value="SecA_PP_bind"/>
    <property type="match status" value="1"/>
</dbReference>
<dbReference type="Pfam" id="PF07516">
    <property type="entry name" value="SecA_SW"/>
    <property type="match status" value="1"/>
</dbReference>
<dbReference type="PRINTS" id="PR00906">
    <property type="entry name" value="SECA"/>
</dbReference>
<dbReference type="SMART" id="SM00957">
    <property type="entry name" value="SecA_DEAD"/>
    <property type="match status" value="1"/>
</dbReference>
<dbReference type="SMART" id="SM00958">
    <property type="entry name" value="SecA_PP_bind"/>
    <property type="match status" value="1"/>
</dbReference>
<dbReference type="SUPFAM" id="SSF81886">
    <property type="entry name" value="Helical scaffold and wing domains of SecA"/>
    <property type="match status" value="1"/>
</dbReference>
<dbReference type="SUPFAM" id="SSF52540">
    <property type="entry name" value="P-loop containing nucleoside triphosphate hydrolases"/>
    <property type="match status" value="2"/>
</dbReference>
<dbReference type="SUPFAM" id="SSF81767">
    <property type="entry name" value="Pre-protein crosslinking domain of SecA"/>
    <property type="match status" value="1"/>
</dbReference>
<dbReference type="PROSITE" id="PS01312">
    <property type="entry name" value="SECA"/>
    <property type="match status" value="1"/>
</dbReference>
<dbReference type="PROSITE" id="PS51196">
    <property type="entry name" value="SECA_MOTOR_DEAD"/>
    <property type="match status" value="1"/>
</dbReference>
<gene>
    <name evidence="1" type="primary">secA</name>
    <name type="ordered locus">MGAS10270_Spy1602</name>
</gene>
<reference key="1">
    <citation type="journal article" date="2006" name="Proc. Natl. Acad. Sci. U.S.A.">
        <title>Molecular genetic anatomy of inter- and intraserotype variation in the human bacterial pathogen group A Streptococcus.</title>
        <authorList>
            <person name="Beres S.B."/>
            <person name="Richter E.W."/>
            <person name="Nagiec M.J."/>
            <person name="Sumby P."/>
            <person name="Porcella S.F."/>
            <person name="DeLeo F.R."/>
            <person name="Musser J.M."/>
        </authorList>
    </citation>
    <scope>NUCLEOTIDE SEQUENCE [LARGE SCALE GENOMIC DNA]</scope>
    <source>
        <strain>MGAS10270</strain>
    </source>
</reference>
<proteinExistence type="inferred from homology"/>
<accession>Q1JF92</accession>
<comment type="function">
    <text evidence="1">Part of the Sec protein translocase complex. Interacts with the SecYEG preprotein conducting channel. Has a central role in coupling the hydrolysis of ATP to the transfer of proteins into and across the cell membrane, serving as an ATP-driven molecular motor driving the stepwise translocation of polypeptide chains across the membrane.</text>
</comment>
<comment type="catalytic activity">
    <reaction evidence="1">
        <text>ATP + H2O + cellular proteinSide 1 = ADP + phosphate + cellular proteinSide 2.</text>
        <dbReference type="EC" id="7.4.2.8"/>
    </reaction>
</comment>
<comment type="cofactor">
    <cofactor evidence="1">
        <name>Zn(2+)</name>
        <dbReference type="ChEBI" id="CHEBI:29105"/>
    </cofactor>
    <text evidence="1">May bind 1 zinc ion per subunit.</text>
</comment>
<comment type="subunit">
    <text evidence="1">Monomer and homodimer. Part of the essential Sec protein translocation apparatus which comprises SecA, SecYEG and auxiliary proteins SecDF. Other proteins may also be involved.</text>
</comment>
<comment type="subcellular location">
    <subcellularLocation>
        <location evidence="1">Cell membrane</location>
        <topology evidence="1">Peripheral membrane protein</topology>
        <orientation evidence="1">Cytoplasmic side</orientation>
    </subcellularLocation>
    <subcellularLocation>
        <location evidence="1">Cytoplasm</location>
    </subcellularLocation>
    <text evidence="1">Distribution is 50-50.</text>
</comment>
<comment type="similarity">
    <text evidence="1">Belongs to the SecA family.</text>
</comment>